<organism>
    <name type="scientific">Staphylococcus aureus (strain USA300)</name>
    <dbReference type="NCBI Taxonomy" id="367830"/>
    <lineage>
        <taxon>Bacteria</taxon>
        <taxon>Bacillati</taxon>
        <taxon>Bacillota</taxon>
        <taxon>Bacilli</taxon>
        <taxon>Bacillales</taxon>
        <taxon>Staphylococcaceae</taxon>
        <taxon>Staphylococcus</taxon>
    </lineage>
</organism>
<reference key="1">
    <citation type="journal article" date="2006" name="Lancet">
        <title>Complete genome sequence of USA300, an epidemic clone of community-acquired meticillin-resistant Staphylococcus aureus.</title>
        <authorList>
            <person name="Diep B.A."/>
            <person name="Gill S.R."/>
            <person name="Chang R.F."/>
            <person name="Phan T.H."/>
            <person name="Chen J.H."/>
            <person name="Davidson M.G."/>
            <person name="Lin F."/>
            <person name="Lin J."/>
            <person name="Carleton H.A."/>
            <person name="Mongodin E.F."/>
            <person name="Sensabaugh G.F."/>
            <person name="Perdreau-Remington F."/>
        </authorList>
    </citation>
    <scope>NUCLEOTIDE SEQUENCE [LARGE SCALE GENOMIC DNA]</scope>
    <source>
        <strain>USA300</strain>
    </source>
</reference>
<evidence type="ECO:0000255" key="1">
    <source>
        <dbReference type="HAMAP-Rule" id="MF_01849"/>
    </source>
</evidence>
<evidence type="ECO:0000255" key="2">
    <source>
        <dbReference type="PROSITE-ProRule" id="PRU01266"/>
    </source>
</evidence>
<keyword id="KW-0004">4Fe-4S</keyword>
<keyword id="KW-0046">Antibiotic resistance</keyword>
<keyword id="KW-0963">Cytoplasm</keyword>
<keyword id="KW-1015">Disulfide bond</keyword>
<keyword id="KW-0408">Iron</keyword>
<keyword id="KW-0411">Iron-sulfur</keyword>
<keyword id="KW-0479">Metal-binding</keyword>
<keyword id="KW-0489">Methyltransferase</keyword>
<keyword id="KW-0698">rRNA processing</keyword>
<keyword id="KW-0949">S-adenosyl-L-methionine</keyword>
<keyword id="KW-0808">Transferase</keyword>
<keyword id="KW-0819">tRNA processing</keyword>
<proteinExistence type="inferred from homology"/>
<feature type="chain" id="PRO_0000350440" description="Probable dual-specificity RNA methyltransferase RlmN">
    <location>
        <begin position="1"/>
        <end position="364"/>
    </location>
</feature>
<feature type="domain" description="Radical SAM core" evidence="2">
    <location>
        <begin position="113"/>
        <end position="346"/>
    </location>
</feature>
<feature type="active site" description="Proton acceptor" evidence="1">
    <location>
        <position position="107"/>
    </location>
</feature>
<feature type="active site" description="S-methylcysteine intermediate" evidence="1">
    <location>
        <position position="351"/>
    </location>
</feature>
<feature type="binding site" evidence="1">
    <location>
        <position position="127"/>
    </location>
    <ligand>
        <name>[4Fe-4S] cluster</name>
        <dbReference type="ChEBI" id="CHEBI:49883"/>
        <note>4Fe-4S-S-AdoMet</note>
    </ligand>
</feature>
<feature type="binding site" evidence="1">
    <location>
        <position position="131"/>
    </location>
    <ligand>
        <name>[4Fe-4S] cluster</name>
        <dbReference type="ChEBI" id="CHEBI:49883"/>
        <note>4Fe-4S-S-AdoMet</note>
    </ligand>
</feature>
<feature type="binding site" evidence="1">
    <location>
        <position position="134"/>
    </location>
    <ligand>
        <name>[4Fe-4S] cluster</name>
        <dbReference type="ChEBI" id="CHEBI:49883"/>
        <note>4Fe-4S-S-AdoMet</note>
    </ligand>
</feature>
<feature type="binding site" evidence="1">
    <location>
        <begin position="177"/>
        <end position="178"/>
    </location>
    <ligand>
        <name>S-adenosyl-L-methionine</name>
        <dbReference type="ChEBI" id="CHEBI:59789"/>
    </ligand>
</feature>
<feature type="binding site" evidence="1">
    <location>
        <position position="209"/>
    </location>
    <ligand>
        <name>S-adenosyl-L-methionine</name>
        <dbReference type="ChEBI" id="CHEBI:59789"/>
    </ligand>
</feature>
<feature type="binding site" evidence="1">
    <location>
        <begin position="232"/>
        <end position="234"/>
    </location>
    <ligand>
        <name>S-adenosyl-L-methionine</name>
        <dbReference type="ChEBI" id="CHEBI:59789"/>
    </ligand>
</feature>
<feature type="binding site" evidence="1">
    <location>
        <position position="308"/>
    </location>
    <ligand>
        <name>S-adenosyl-L-methionine</name>
        <dbReference type="ChEBI" id="CHEBI:59789"/>
    </ligand>
</feature>
<feature type="disulfide bond" description="(transient)" evidence="1">
    <location>
        <begin position="120"/>
        <end position="351"/>
    </location>
</feature>
<protein>
    <recommendedName>
        <fullName evidence="1">Probable dual-specificity RNA methyltransferase RlmN</fullName>
        <ecNumber evidence="1">2.1.1.192</ecNumber>
    </recommendedName>
    <alternativeName>
        <fullName evidence="1">23S rRNA (adenine(2503)-C(2))-methyltransferase</fullName>
    </alternativeName>
    <alternativeName>
        <fullName evidence="1">23S rRNA m2A2503 methyltransferase</fullName>
    </alternativeName>
    <alternativeName>
        <fullName evidence="1">Ribosomal RNA large subunit methyltransferase N</fullName>
    </alternativeName>
    <alternativeName>
        <fullName evidence="1">tRNA (adenine(37)-C(2))-methyltransferase</fullName>
    </alternativeName>
    <alternativeName>
        <fullName evidence="1">tRNA m2A37 methyltransferase</fullName>
    </alternativeName>
</protein>
<sequence>MITAEKKKKNKFLPNFDKQSIYSLRFDEMQNWLVEQGQQKFRAKQIFEWLYQKRVDSIDEMTNLSKDLRQLLKDNFTVTTLTTVVKQESKDGTIKFLFELQDGYTIETVLMRHDYGNSVCVTTQVGCRIGCTFCASTLGGLKRNLEAGEIVSQVLTVQKALDATEERVSQIVIMGIGEPFENYDEMMDFLRIVNDDNSLNIGARHITVSTSGIIPRIYDFADEDIQINFAVSLHAAKDEVRSRLMPINRAYNVEKLIEAIQYYQEKTNRRVTFEYGLFGGVNDQLEHARELAHLIKGLNCHVNLIPVNHVPERNYVKTAKNDIFKFEKELKRLGINATIRREQGSDIDAACGQLRAKERQVETR</sequence>
<accession>Q2FHM0</accession>
<comment type="function">
    <text evidence="1">Specifically methylates position 2 of adenine 2503 in 23S rRNA and position 2 of adenine 37 in tRNAs. Confers resistance to some classes of antibiotics.</text>
</comment>
<comment type="catalytic activity">
    <reaction evidence="1">
        <text>adenosine(2503) in 23S rRNA + 2 reduced [2Fe-2S]-[ferredoxin] + 2 S-adenosyl-L-methionine = 2-methyladenosine(2503) in 23S rRNA + 5'-deoxyadenosine + L-methionine + 2 oxidized [2Fe-2S]-[ferredoxin] + S-adenosyl-L-homocysteine</text>
        <dbReference type="Rhea" id="RHEA:42916"/>
        <dbReference type="Rhea" id="RHEA-COMP:10000"/>
        <dbReference type="Rhea" id="RHEA-COMP:10001"/>
        <dbReference type="Rhea" id="RHEA-COMP:10152"/>
        <dbReference type="Rhea" id="RHEA-COMP:10282"/>
        <dbReference type="ChEBI" id="CHEBI:17319"/>
        <dbReference type="ChEBI" id="CHEBI:33737"/>
        <dbReference type="ChEBI" id="CHEBI:33738"/>
        <dbReference type="ChEBI" id="CHEBI:57844"/>
        <dbReference type="ChEBI" id="CHEBI:57856"/>
        <dbReference type="ChEBI" id="CHEBI:59789"/>
        <dbReference type="ChEBI" id="CHEBI:74411"/>
        <dbReference type="ChEBI" id="CHEBI:74497"/>
        <dbReference type="EC" id="2.1.1.192"/>
    </reaction>
</comment>
<comment type="catalytic activity">
    <reaction evidence="1">
        <text>adenosine(37) in tRNA + 2 reduced [2Fe-2S]-[ferredoxin] + 2 S-adenosyl-L-methionine = 2-methyladenosine(37) in tRNA + 5'-deoxyadenosine + L-methionine + 2 oxidized [2Fe-2S]-[ferredoxin] + S-adenosyl-L-homocysteine</text>
        <dbReference type="Rhea" id="RHEA:43332"/>
        <dbReference type="Rhea" id="RHEA-COMP:10000"/>
        <dbReference type="Rhea" id="RHEA-COMP:10001"/>
        <dbReference type="Rhea" id="RHEA-COMP:10162"/>
        <dbReference type="Rhea" id="RHEA-COMP:10485"/>
        <dbReference type="ChEBI" id="CHEBI:17319"/>
        <dbReference type="ChEBI" id="CHEBI:33737"/>
        <dbReference type="ChEBI" id="CHEBI:33738"/>
        <dbReference type="ChEBI" id="CHEBI:57844"/>
        <dbReference type="ChEBI" id="CHEBI:57856"/>
        <dbReference type="ChEBI" id="CHEBI:59789"/>
        <dbReference type="ChEBI" id="CHEBI:74411"/>
        <dbReference type="ChEBI" id="CHEBI:74497"/>
        <dbReference type="EC" id="2.1.1.192"/>
    </reaction>
</comment>
<comment type="cofactor">
    <cofactor evidence="1">
        <name>[4Fe-4S] cluster</name>
        <dbReference type="ChEBI" id="CHEBI:49883"/>
    </cofactor>
    <text evidence="1">Binds 1 [4Fe-4S] cluster. The cluster is coordinated with 3 cysteines and an exchangeable S-adenosyl-L-methionine.</text>
</comment>
<comment type="subcellular location">
    <subcellularLocation>
        <location evidence="1">Cytoplasm</location>
    </subcellularLocation>
</comment>
<comment type="miscellaneous">
    <text evidence="1">Reaction proceeds by a ping-pong mechanism involving intermediate methylation of a conserved cysteine residue.</text>
</comment>
<comment type="similarity">
    <text evidence="1">Belongs to the radical SAM superfamily. RlmN family.</text>
</comment>
<gene>
    <name evidence="1" type="primary">rlmN</name>
    <name type="ordered locus">SAUSA300_1111</name>
</gene>
<dbReference type="EC" id="2.1.1.192" evidence="1"/>
<dbReference type="EMBL" id="CP000255">
    <property type="protein sequence ID" value="ABD20835.1"/>
    <property type="molecule type" value="Genomic_DNA"/>
</dbReference>
<dbReference type="RefSeq" id="WP_000626897.1">
    <property type="nucleotide sequence ID" value="NZ_CP027476.1"/>
</dbReference>
<dbReference type="SMR" id="Q2FHM0"/>
<dbReference type="KEGG" id="saa:SAUSA300_1111"/>
<dbReference type="HOGENOM" id="CLU_029101_0_1_9"/>
<dbReference type="OMA" id="TMKFLFE"/>
<dbReference type="Proteomes" id="UP000001939">
    <property type="component" value="Chromosome"/>
</dbReference>
<dbReference type="GO" id="GO:0005737">
    <property type="term" value="C:cytoplasm"/>
    <property type="evidence" value="ECO:0007669"/>
    <property type="project" value="UniProtKB-SubCell"/>
</dbReference>
<dbReference type="GO" id="GO:0051539">
    <property type="term" value="F:4 iron, 4 sulfur cluster binding"/>
    <property type="evidence" value="ECO:0007669"/>
    <property type="project" value="UniProtKB-UniRule"/>
</dbReference>
<dbReference type="GO" id="GO:0046872">
    <property type="term" value="F:metal ion binding"/>
    <property type="evidence" value="ECO:0007669"/>
    <property type="project" value="UniProtKB-KW"/>
</dbReference>
<dbReference type="GO" id="GO:0070040">
    <property type="term" value="F:rRNA (adenine(2503)-C2-)-methyltransferase activity"/>
    <property type="evidence" value="ECO:0007669"/>
    <property type="project" value="UniProtKB-UniRule"/>
</dbReference>
<dbReference type="GO" id="GO:0019843">
    <property type="term" value="F:rRNA binding"/>
    <property type="evidence" value="ECO:0007669"/>
    <property type="project" value="UniProtKB-UniRule"/>
</dbReference>
<dbReference type="GO" id="GO:0002935">
    <property type="term" value="F:tRNA (adenine(37)-C2)-methyltransferase activity"/>
    <property type="evidence" value="ECO:0007669"/>
    <property type="project" value="UniProtKB-UniRule"/>
</dbReference>
<dbReference type="GO" id="GO:0000049">
    <property type="term" value="F:tRNA binding"/>
    <property type="evidence" value="ECO:0007669"/>
    <property type="project" value="UniProtKB-UniRule"/>
</dbReference>
<dbReference type="GO" id="GO:0046677">
    <property type="term" value="P:response to antibiotic"/>
    <property type="evidence" value="ECO:0007669"/>
    <property type="project" value="UniProtKB-KW"/>
</dbReference>
<dbReference type="GO" id="GO:0070475">
    <property type="term" value="P:rRNA base methylation"/>
    <property type="evidence" value="ECO:0007669"/>
    <property type="project" value="UniProtKB-UniRule"/>
</dbReference>
<dbReference type="GO" id="GO:0030488">
    <property type="term" value="P:tRNA methylation"/>
    <property type="evidence" value="ECO:0007669"/>
    <property type="project" value="UniProtKB-UniRule"/>
</dbReference>
<dbReference type="CDD" id="cd01335">
    <property type="entry name" value="Radical_SAM"/>
    <property type="match status" value="1"/>
</dbReference>
<dbReference type="FunFam" id="1.10.150.530:FF:000002">
    <property type="entry name" value="Probable dual-specificity RNA methyltransferase RlmN"/>
    <property type="match status" value="1"/>
</dbReference>
<dbReference type="FunFam" id="3.20.20.70:FF:000014">
    <property type="entry name" value="Probable dual-specificity RNA methyltransferase RlmN"/>
    <property type="match status" value="1"/>
</dbReference>
<dbReference type="Gene3D" id="1.10.150.530">
    <property type="match status" value="1"/>
</dbReference>
<dbReference type="Gene3D" id="3.20.20.70">
    <property type="entry name" value="Aldolase class I"/>
    <property type="match status" value="1"/>
</dbReference>
<dbReference type="HAMAP" id="MF_01849">
    <property type="entry name" value="RNA_methyltr_RlmN"/>
    <property type="match status" value="1"/>
</dbReference>
<dbReference type="InterPro" id="IPR013785">
    <property type="entry name" value="Aldolase_TIM"/>
</dbReference>
<dbReference type="InterPro" id="IPR040072">
    <property type="entry name" value="Methyltransferase_A"/>
</dbReference>
<dbReference type="InterPro" id="IPR048641">
    <property type="entry name" value="RlmN_N"/>
</dbReference>
<dbReference type="InterPro" id="IPR027492">
    <property type="entry name" value="RNA_MTrfase_RlmN"/>
</dbReference>
<dbReference type="InterPro" id="IPR004383">
    <property type="entry name" value="rRNA_lsu_MTrfase_RlmN/Cfr"/>
</dbReference>
<dbReference type="InterPro" id="IPR007197">
    <property type="entry name" value="rSAM"/>
</dbReference>
<dbReference type="NCBIfam" id="TIGR00048">
    <property type="entry name" value="rRNA_mod_RlmN"/>
    <property type="match status" value="1"/>
</dbReference>
<dbReference type="PANTHER" id="PTHR30544">
    <property type="entry name" value="23S RRNA METHYLTRANSFERASE"/>
    <property type="match status" value="1"/>
</dbReference>
<dbReference type="PANTHER" id="PTHR30544:SF5">
    <property type="entry name" value="RADICAL SAM CORE DOMAIN-CONTAINING PROTEIN"/>
    <property type="match status" value="1"/>
</dbReference>
<dbReference type="Pfam" id="PF04055">
    <property type="entry name" value="Radical_SAM"/>
    <property type="match status" value="1"/>
</dbReference>
<dbReference type="Pfam" id="PF21016">
    <property type="entry name" value="RlmN_N"/>
    <property type="match status" value="1"/>
</dbReference>
<dbReference type="PIRSF" id="PIRSF006004">
    <property type="entry name" value="CHP00048"/>
    <property type="match status" value="1"/>
</dbReference>
<dbReference type="SFLD" id="SFLDF00275">
    <property type="entry name" value="adenosine_C2_methyltransferase"/>
    <property type="match status" value="1"/>
</dbReference>
<dbReference type="SFLD" id="SFLDG01062">
    <property type="entry name" value="methyltransferase_(Class_A)"/>
    <property type="match status" value="1"/>
</dbReference>
<dbReference type="SUPFAM" id="SSF102114">
    <property type="entry name" value="Radical SAM enzymes"/>
    <property type="match status" value="1"/>
</dbReference>
<dbReference type="PROSITE" id="PS51918">
    <property type="entry name" value="RADICAL_SAM"/>
    <property type="match status" value="1"/>
</dbReference>
<name>RLMN_STAA3</name>